<dbReference type="EMBL" id="CP001182">
    <property type="protein sequence ID" value="ACJ42882.1"/>
    <property type="molecule type" value="Genomic_DNA"/>
</dbReference>
<dbReference type="RefSeq" id="WP_000091932.1">
    <property type="nucleotide sequence ID" value="NC_011586.2"/>
</dbReference>
<dbReference type="PDB" id="6V39">
    <property type="method" value="EM"/>
    <property type="resolution" value="3.04 A"/>
    <property type="chains" value="G=1-177"/>
</dbReference>
<dbReference type="PDB" id="6V3A">
    <property type="method" value="EM"/>
    <property type="resolution" value="2.82 A"/>
    <property type="chains" value="G=1-177"/>
</dbReference>
<dbReference type="PDB" id="6V3B">
    <property type="method" value="EM"/>
    <property type="resolution" value="2.91 A"/>
    <property type="chains" value="G=1-177"/>
</dbReference>
<dbReference type="PDB" id="6V3D">
    <property type="method" value="EM"/>
    <property type="resolution" value="2.95 A"/>
    <property type="chains" value="G=1-177"/>
</dbReference>
<dbReference type="PDB" id="7M4V">
    <property type="method" value="EM"/>
    <property type="resolution" value="2.54 A"/>
    <property type="chains" value="G=1-177"/>
</dbReference>
<dbReference type="PDB" id="7M4W">
    <property type="method" value="EM"/>
    <property type="resolution" value="2.55 A"/>
    <property type="chains" value="G=1-177"/>
</dbReference>
<dbReference type="PDB" id="7M4X">
    <property type="method" value="EM"/>
    <property type="resolution" value="2.66 A"/>
    <property type="chains" value="G=1-177"/>
</dbReference>
<dbReference type="PDB" id="7M4Y">
    <property type="method" value="EM"/>
    <property type="resolution" value="2.50 A"/>
    <property type="chains" value="G=1-177"/>
</dbReference>
<dbReference type="PDB" id="7M4Z">
    <property type="method" value="EM"/>
    <property type="resolution" value="2.92 A"/>
    <property type="chains" value="G=1-177"/>
</dbReference>
<dbReference type="PDB" id="7RYF">
    <property type="method" value="EM"/>
    <property type="resolution" value="2.65 A"/>
    <property type="chains" value="G=1-177"/>
</dbReference>
<dbReference type="PDB" id="7RYG">
    <property type="method" value="EM"/>
    <property type="resolution" value="2.38 A"/>
    <property type="chains" value="G=1-177"/>
</dbReference>
<dbReference type="PDB" id="7RYH">
    <property type="method" value="EM"/>
    <property type="resolution" value="2.43 A"/>
    <property type="chains" value="G=1-177"/>
</dbReference>
<dbReference type="PDB" id="7UVV">
    <property type="method" value="EM"/>
    <property type="resolution" value="2.50 A"/>
    <property type="chains" value="G=1-177"/>
</dbReference>
<dbReference type="PDB" id="7UVW">
    <property type="method" value="EM"/>
    <property type="resolution" value="2.37 A"/>
    <property type="chains" value="G=1-177"/>
</dbReference>
<dbReference type="PDB" id="7UVX">
    <property type="method" value="EM"/>
    <property type="resolution" value="2.35 A"/>
    <property type="chains" value="G=1-177"/>
</dbReference>
<dbReference type="PDB" id="7UVY">
    <property type="method" value="EM"/>
    <property type="resolution" value="2.39 A"/>
    <property type="chains" value="G=1-177"/>
</dbReference>
<dbReference type="PDB" id="7UVZ">
    <property type="method" value="EM"/>
    <property type="resolution" value="2.21 A"/>
    <property type="chains" value="G=1-177"/>
</dbReference>
<dbReference type="PDB" id="7UW1">
    <property type="method" value="EM"/>
    <property type="resolution" value="2.21 A"/>
    <property type="chains" value="G=1-177"/>
</dbReference>
<dbReference type="PDBsum" id="6V39"/>
<dbReference type="PDBsum" id="6V3A"/>
<dbReference type="PDBsum" id="6V3B"/>
<dbReference type="PDBsum" id="6V3D"/>
<dbReference type="PDBsum" id="7M4V"/>
<dbReference type="PDBsum" id="7M4W"/>
<dbReference type="PDBsum" id="7M4X"/>
<dbReference type="PDBsum" id="7M4Y"/>
<dbReference type="PDBsum" id="7M4Z"/>
<dbReference type="PDBsum" id="7RYF"/>
<dbReference type="PDBsum" id="7RYG"/>
<dbReference type="PDBsum" id="7RYH"/>
<dbReference type="PDBsum" id="7UVV"/>
<dbReference type="PDBsum" id="7UVW"/>
<dbReference type="PDBsum" id="7UVX"/>
<dbReference type="PDBsum" id="7UVY"/>
<dbReference type="PDBsum" id="7UVZ"/>
<dbReference type="PDBsum" id="7UW1"/>
<dbReference type="EMDB" id="EMD-21030"/>
<dbReference type="EMDB" id="EMD-21031"/>
<dbReference type="EMDB" id="EMD-21032"/>
<dbReference type="EMDB" id="EMD-21033"/>
<dbReference type="EMDB" id="EMD-23667"/>
<dbReference type="EMDB" id="EMD-23668"/>
<dbReference type="EMDB" id="EMD-23669"/>
<dbReference type="EMDB" id="EMD-23670"/>
<dbReference type="EMDB" id="EMD-23671"/>
<dbReference type="EMDB" id="EMD-24738"/>
<dbReference type="EMDB" id="EMD-24739"/>
<dbReference type="EMDB" id="EMD-24740"/>
<dbReference type="EMDB" id="EMD-26817"/>
<dbReference type="EMDB" id="EMD-26818"/>
<dbReference type="EMDB" id="EMD-26819"/>
<dbReference type="EMDB" id="EMD-26820"/>
<dbReference type="EMDB" id="EMD-26821"/>
<dbReference type="EMDB" id="EMD-26822"/>
<dbReference type="SMR" id="B7IA24"/>
<dbReference type="IntAct" id="B7IA24">
    <property type="interactions" value="2"/>
</dbReference>
<dbReference type="GeneID" id="92895302"/>
<dbReference type="KEGG" id="abn:AB57_3515"/>
<dbReference type="HOGENOM" id="CLU_065464_1_2_6"/>
<dbReference type="Proteomes" id="UP000007094">
    <property type="component" value="Chromosome"/>
</dbReference>
<dbReference type="GO" id="GO:0022625">
    <property type="term" value="C:cytosolic large ribosomal subunit"/>
    <property type="evidence" value="ECO:0007669"/>
    <property type="project" value="TreeGrafter"/>
</dbReference>
<dbReference type="GO" id="GO:0019843">
    <property type="term" value="F:rRNA binding"/>
    <property type="evidence" value="ECO:0007669"/>
    <property type="project" value="UniProtKB-UniRule"/>
</dbReference>
<dbReference type="GO" id="GO:0003735">
    <property type="term" value="F:structural constituent of ribosome"/>
    <property type="evidence" value="ECO:0007669"/>
    <property type="project" value="InterPro"/>
</dbReference>
<dbReference type="GO" id="GO:0002181">
    <property type="term" value="P:cytoplasmic translation"/>
    <property type="evidence" value="ECO:0007669"/>
    <property type="project" value="TreeGrafter"/>
</dbReference>
<dbReference type="FunFam" id="3.90.930.12:FF:000001">
    <property type="entry name" value="50S ribosomal protein L6"/>
    <property type="match status" value="1"/>
</dbReference>
<dbReference type="FunFam" id="3.90.930.12:FF:000002">
    <property type="entry name" value="50S ribosomal protein L6"/>
    <property type="match status" value="1"/>
</dbReference>
<dbReference type="Gene3D" id="3.90.930.12">
    <property type="entry name" value="Ribosomal protein L6, alpha-beta domain"/>
    <property type="match status" value="2"/>
</dbReference>
<dbReference type="HAMAP" id="MF_01365_B">
    <property type="entry name" value="Ribosomal_uL6_B"/>
    <property type="match status" value="1"/>
</dbReference>
<dbReference type="InterPro" id="IPR000702">
    <property type="entry name" value="Ribosomal_uL6-like"/>
</dbReference>
<dbReference type="InterPro" id="IPR036789">
    <property type="entry name" value="Ribosomal_uL6-like_a/b-dom_sf"/>
</dbReference>
<dbReference type="InterPro" id="IPR020040">
    <property type="entry name" value="Ribosomal_uL6_a/b-dom"/>
</dbReference>
<dbReference type="InterPro" id="IPR019906">
    <property type="entry name" value="Ribosomal_uL6_bac-type"/>
</dbReference>
<dbReference type="InterPro" id="IPR002358">
    <property type="entry name" value="Ribosomal_uL6_CS"/>
</dbReference>
<dbReference type="NCBIfam" id="TIGR03654">
    <property type="entry name" value="L6_bact"/>
    <property type="match status" value="1"/>
</dbReference>
<dbReference type="PANTHER" id="PTHR11655">
    <property type="entry name" value="60S/50S RIBOSOMAL PROTEIN L6/L9"/>
    <property type="match status" value="1"/>
</dbReference>
<dbReference type="PANTHER" id="PTHR11655:SF14">
    <property type="entry name" value="LARGE RIBOSOMAL SUBUNIT PROTEIN UL6M"/>
    <property type="match status" value="1"/>
</dbReference>
<dbReference type="Pfam" id="PF00347">
    <property type="entry name" value="Ribosomal_L6"/>
    <property type="match status" value="2"/>
</dbReference>
<dbReference type="PIRSF" id="PIRSF002162">
    <property type="entry name" value="Ribosomal_L6"/>
    <property type="match status" value="1"/>
</dbReference>
<dbReference type="PRINTS" id="PR00059">
    <property type="entry name" value="RIBOSOMALL6"/>
</dbReference>
<dbReference type="SUPFAM" id="SSF56053">
    <property type="entry name" value="Ribosomal protein L6"/>
    <property type="match status" value="2"/>
</dbReference>
<dbReference type="PROSITE" id="PS00525">
    <property type="entry name" value="RIBOSOMAL_L6_1"/>
    <property type="match status" value="1"/>
</dbReference>
<sequence>MSRVAKAPVTVPNGVTVTQNGRQVEVKGSKGTLSFNLHALVELKQEEGKLQLAPAKESKDAWMQAGTARAVLNNLVKGVSEGFERKLQLVGVGYKAAVKGTVVNLNLGYSHPIDYALPEGVTAETPTATEIILKSANKQLLGQVAAEIRAYRSPEPYKGKGVRYSDEVILRKEAKKK</sequence>
<reference key="1">
    <citation type="journal article" date="2008" name="J. Bacteriol.">
        <title>Comparative genome sequence analysis of multidrug-resistant Acinetobacter baumannii.</title>
        <authorList>
            <person name="Adams M.D."/>
            <person name="Goglin K."/>
            <person name="Molyneaux N."/>
            <person name="Hujer K.M."/>
            <person name="Lavender H."/>
            <person name="Jamison J.J."/>
            <person name="MacDonald I.J."/>
            <person name="Martin K.M."/>
            <person name="Russo T."/>
            <person name="Campagnari A.A."/>
            <person name="Hujer A.M."/>
            <person name="Bonomo R.A."/>
            <person name="Gill S.R."/>
        </authorList>
    </citation>
    <scope>NUCLEOTIDE SEQUENCE [LARGE SCALE GENOMIC DNA]</scope>
    <source>
        <strain>AB0057</strain>
    </source>
</reference>
<name>RL6_ACIB5</name>
<organism>
    <name type="scientific">Acinetobacter baumannii (strain AB0057)</name>
    <dbReference type="NCBI Taxonomy" id="480119"/>
    <lineage>
        <taxon>Bacteria</taxon>
        <taxon>Pseudomonadati</taxon>
        <taxon>Pseudomonadota</taxon>
        <taxon>Gammaproteobacteria</taxon>
        <taxon>Moraxellales</taxon>
        <taxon>Moraxellaceae</taxon>
        <taxon>Acinetobacter</taxon>
        <taxon>Acinetobacter calcoaceticus/baumannii complex</taxon>
    </lineage>
</organism>
<gene>
    <name evidence="1" type="primary">rplF</name>
    <name type="ordered locus">AB57_3515</name>
</gene>
<proteinExistence type="evidence at protein level"/>
<keyword id="KW-0002">3D-structure</keyword>
<keyword id="KW-0687">Ribonucleoprotein</keyword>
<keyword id="KW-0689">Ribosomal protein</keyword>
<keyword id="KW-0694">RNA-binding</keyword>
<keyword id="KW-0699">rRNA-binding</keyword>
<comment type="function">
    <text evidence="1">This protein binds to the 23S rRNA, and is important in its secondary structure. It is located near the subunit interface in the base of the L7/L12 stalk, and near the tRNA binding site of the peptidyltransferase center.</text>
</comment>
<comment type="subunit">
    <text evidence="1">Part of the 50S ribosomal subunit.</text>
</comment>
<comment type="similarity">
    <text evidence="1">Belongs to the universal ribosomal protein uL6 family.</text>
</comment>
<protein>
    <recommendedName>
        <fullName evidence="1">Large ribosomal subunit protein uL6</fullName>
    </recommendedName>
    <alternativeName>
        <fullName evidence="2">50S ribosomal protein L6</fullName>
    </alternativeName>
</protein>
<accession>B7IA24</accession>
<evidence type="ECO:0000255" key="1">
    <source>
        <dbReference type="HAMAP-Rule" id="MF_01365"/>
    </source>
</evidence>
<evidence type="ECO:0000305" key="2"/>
<evidence type="ECO:0007829" key="3">
    <source>
        <dbReference type="PDB" id="7M4V"/>
    </source>
</evidence>
<feature type="chain" id="PRO_1000143930" description="Large ribosomal subunit protein uL6">
    <location>
        <begin position="1"/>
        <end position="177"/>
    </location>
</feature>
<feature type="helix" evidence="3">
    <location>
        <begin position="3"/>
        <end position="6"/>
    </location>
</feature>
<feature type="strand" evidence="3">
    <location>
        <begin position="16"/>
        <end position="20"/>
    </location>
</feature>
<feature type="strand" evidence="3">
    <location>
        <begin position="23"/>
        <end position="27"/>
    </location>
</feature>
<feature type="strand" evidence="3">
    <location>
        <begin position="32"/>
        <end position="36"/>
    </location>
</feature>
<feature type="strand" evidence="3">
    <location>
        <begin position="39"/>
        <end position="57"/>
    </location>
</feature>
<feature type="helix" evidence="3">
    <location>
        <begin position="59"/>
        <end position="79"/>
    </location>
</feature>
<feature type="strand" evidence="3">
    <location>
        <begin position="87"/>
        <end position="91"/>
    </location>
</feature>
<feature type="strand" evidence="3">
    <location>
        <begin position="95"/>
        <end position="99"/>
    </location>
</feature>
<feature type="strand" evidence="3">
    <location>
        <begin position="102"/>
        <end position="106"/>
    </location>
</feature>
<feature type="strand" evidence="3">
    <location>
        <begin position="108"/>
        <end position="111"/>
    </location>
</feature>
<feature type="strand" evidence="3">
    <location>
        <begin position="113"/>
        <end position="116"/>
    </location>
</feature>
<feature type="strand" evidence="3">
    <location>
        <begin position="121"/>
        <end position="124"/>
    </location>
</feature>
<feature type="strand" evidence="3">
    <location>
        <begin position="130"/>
        <end position="136"/>
    </location>
</feature>
<feature type="helix" evidence="3">
    <location>
        <begin position="138"/>
        <end position="151"/>
    </location>
</feature>
<feature type="turn" evidence="3">
    <location>
        <begin position="156"/>
        <end position="158"/>
    </location>
</feature>
<feature type="strand" evidence="3">
    <location>
        <begin position="161"/>
        <end position="164"/>
    </location>
</feature>